<name>SMP07_NAUMA</name>
<evidence type="ECO:0000269" key="1">
    <source>
    </source>
</evidence>
<evidence type="ECO:0000303" key="2">
    <source>
    </source>
</evidence>
<organism>
    <name type="scientific">Nautilus macromphalus</name>
    <name type="common">Bellybutton nautilus</name>
    <dbReference type="NCBI Taxonomy" id="34576"/>
    <lineage>
        <taxon>Eukaryota</taxon>
        <taxon>Metazoa</taxon>
        <taxon>Spiralia</taxon>
        <taxon>Lophotrochozoa</taxon>
        <taxon>Mollusca</taxon>
        <taxon>Cephalopoda</taxon>
        <taxon>Nautiloidea</taxon>
        <taxon>Nautilida</taxon>
        <taxon>Nautilidae</taxon>
        <taxon>Nautilus</taxon>
    </lineage>
</organism>
<sequence>LYSLLTEK</sequence>
<keyword id="KW-0903">Direct protein sequencing</keyword>
<accession>P85374</accession>
<protein>
    <recommendedName>
        <fullName evidence="2">Uncharacterized protein SMPP7</fullName>
    </recommendedName>
</protein>
<reference key="1">
    <citation type="journal article" date="2009" name="ChemBioChem">
        <title>Evolution of nacre: biochemistry and 'shellomics' of the shell organic matrix of the cephalopod Nautilus macromphalus.</title>
        <authorList>
            <person name="Marie B."/>
            <person name="Marin F."/>
            <person name="Marie A."/>
            <person name="Bedouet L."/>
            <person name="Dubost L."/>
            <person name="Alcaraz G."/>
            <person name="Milet C."/>
            <person name="Luquet G."/>
        </authorList>
    </citation>
    <scope>PROTEIN SEQUENCE</scope>
    <scope>TISSUE SPECIFICITY</scope>
    <source>
        <tissue>Shell</tissue>
    </source>
</reference>
<proteinExistence type="evidence at protein level"/>
<feature type="chain" id="PRO_0000371488" description="Uncharacterized protein SMPP7">
    <location>
        <begin position="1" status="less than"/>
        <end position="8" status="greater than"/>
    </location>
</feature>
<feature type="unsure residue" description="L or I" evidence="1">
    <location>
        <position position="1"/>
    </location>
</feature>
<feature type="unsure residue" description="L or I" evidence="1">
    <location>
        <position position="4"/>
    </location>
</feature>
<feature type="unsure residue" description="L or I" evidence="1">
    <location>
        <position position="5"/>
    </location>
</feature>
<feature type="non-terminal residue" evidence="2">
    <location>
        <position position="1"/>
    </location>
</feature>
<feature type="non-terminal residue" evidence="2">
    <location>
        <position position="8"/>
    </location>
</feature>
<comment type="tissue specificity">
    <text evidence="1">Nacreous layer of shell.</text>
</comment>